<name>MOBA_ACIBT</name>
<protein>
    <recommendedName>
        <fullName evidence="1">Molybdenum cofactor guanylyltransferase</fullName>
        <shortName evidence="1">MoCo guanylyltransferase</shortName>
        <ecNumber evidence="1">2.7.7.77</ecNumber>
    </recommendedName>
    <alternativeName>
        <fullName evidence="1">GTP:molybdopterin guanylyltransferase</fullName>
    </alternativeName>
    <alternativeName>
        <fullName evidence="1">Mo-MPT guanylyltransferase</fullName>
    </alternativeName>
    <alternativeName>
        <fullName evidence="1">Molybdopterin guanylyltransferase</fullName>
    </alternativeName>
    <alternativeName>
        <fullName evidence="1">Molybdopterin-guanine dinucleotide synthase</fullName>
        <shortName evidence="1">MGD synthase</shortName>
    </alternativeName>
</protein>
<comment type="function">
    <text evidence="1">Transfers a GMP moiety from GTP to Mo-molybdopterin (Mo-MPT) cofactor (Moco or molybdenum cofactor) to form Mo-molybdopterin guanine dinucleotide (Mo-MGD) cofactor.</text>
</comment>
<comment type="catalytic activity">
    <reaction evidence="1">
        <text>Mo-molybdopterin + GTP + H(+) = Mo-molybdopterin guanine dinucleotide + diphosphate</text>
        <dbReference type="Rhea" id="RHEA:34243"/>
        <dbReference type="ChEBI" id="CHEBI:15378"/>
        <dbReference type="ChEBI" id="CHEBI:33019"/>
        <dbReference type="ChEBI" id="CHEBI:37565"/>
        <dbReference type="ChEBI" id="CHEBI:71302"/>
        <dbReference type="ChEBI" id="CHEBI:71310"/>
        <dbReference type="EC" id="2.7.7.77"/>
    </reaction>
</comment>
<comment type="cofactor">
    <cofactor evidence="1">
        <name>Mg(2+)</name>
        <dbReference type="ChEBI" id="CHEBI:18420"/>
    </cofactor>
</comment>
<comment type="subunit">
    <text evidence="1">Monomer.</text>
</comment>
<comment type="subcellular location">
    <subcellularLocation>
        <location evidence="1">Cytoplasm</location>
    </subcellularLocation>
</comment>
<comment type="domain">
    <text evidence="1">The N-terminal domain determines nucleotide recognition and specific binding, while the C-terminal domain determines the specific binding to the target protein.</text>
</comment>
<comment type="similarity">
    <text evidence="1">Belongs to the MobA family.</text>
</comment>
<keyword id="KW-0963">Cytoplasm</keyword>
<keyword id="KW-0342">GTP-binding</keyword>
<keyword id="KW-0460">Magnesium</keyword>
<keyword id="KW-0479">Metal-binding</keyword>
<keyword id="KW-0501">Molybdenum cofactor biosynthesis</keyword>
<keyword id="KW-0547">Nucleotide-binding</keyword>
<keyword id="KW-0808">Transferase</keyword>
<sequence>MNKGYPVTDLVILAGGQARRMNGLNKLLQQFDGDTQLLKIHQKLKSSVSEIWVNSHRDYSIYQSIVPDIKCFQDDASGFFGPLMGMKSAWSHVKADYVLFIPCDVTYIPTQVVAKLHSALRKNKQAQAAYVSINGDALYPFCLLKRESLEVLEQQIDKQQLSLKNCFKLLHAQVAIFQKQNLFFHSINSLDELQQYKQIKAFKEIFSTN</sequence>
<proteinExistence type="inferred from homology"/>
<gene>
    <name evidence="1" type="primary">mobA</name>
    <name type="ordered locus">A1S_2001</name>
</gene>
<reference key="1">
    <citation type="journal article" date="2007" name="Genes Dev.">
        <title>New insights into Acinetobacter baumannii pathogenesis revealed by high-density pyrosequencing and transposon mutagenesis.</title>
        <authorList>
            <person name="Smith M.G."/>
            <person name="Gianoulis T.A."/>
            <person name="Pukatzki S."/>
            <person name="Mekalanos J.J."/>
            <person name="Ornston L.N."/>
            <person name="Gerstein M."/>
            <person name="Snyder M."/>
        </authorList>
    </citation>
    <scope>NUCLEOTIDE SEQUENCE [LARGE SCALE GENOMIC DNA]</scope>
    <source>
        <strain>ATCC 17978 / DSM 105126 / CIP 53.77 / LMG 1025 / NCDC KC755 / 5377</strain>
    </source>
</reference>
<accession>A3M684</accession>
<dbReference type="EC" id="2.7.7.77" evidence="1"/>
<dbReference type="EMBL" id="CP000521">
    <property type="protein sequence ID" value="ABO12428.2"/>
    <property type="molecule type" value="Genomic_DNA"/>
</dbReference>
<dbReference type="RefSeq" id="WP_001032658.1">
    <property type="nucleotide sequence ID" value="NZ_CP053098.1"/>
</dbReference>
<dbReference type="SMR" id="A3M684"/>
<dbReference type="KEGG" id="acb:A1S_2001"/>
<dbReference type="HOGENOM" id="CLU_055597_5_1_6"/>
<dbReference type="GO" id="GO:0005737">
    <property type="term" value="C:cytoplasm"/>
    <property type="evidence" value="ECO:0007669"/>
    <property type="project" value="UniProtKB-SubCell"/>
</dbReference>
<dbReference type="GO" id="GO:0005525">
    <property type="term" value="F:GTP binding"/>
    <property type="evidence" value="ECO:0007669"/>
    <property type="project" value="UniProtKB-UniRule"/>
</dbReference>
<dbReference type="GO" id="GO:0046872">
    <property type="term" value="F:metal ion binding"/>
    <property type="evidence" value="ECO:0007669"/>
    <property type="project" value="UniProtKB-KW"/>
</dbReference>
<dbReference type="GO" id="GO:0061603">
    <property type="term" value="F:molybdenum cofactor guanylyltransferase activity"/>
    <property type="evidence" value="ECO:0007669"/>
    <property type="project" value="UniProtKB-EC"/>
</dbReference>
<dbReference type="GO" id="GO:1902758">
    <property type="term" value="P:bis(molybdopterin guanine dinucleotide)molybdenum biosynthetic process"/>
    <property type="evidence" value="ECO:0007669"/>
    <property type="project" value="TreeGrafter"/>
</dbReference>
<dbReference type="CDD" id="cd02503">
    <property type="entry name" value="MobA"/>
    <property type="match status" value="1"/>
</dbReference>
<dbReference type="Gene3D" id="3.90.550.10">
    <property type="entry name" value="Spore Coat Polysaccharide Biosynthesis Protein SpsA, Chain A"/>
    <property type="match status" value="1"/>
</dbReference>
<dbReference type="HAMAP" id="MF_00316">
    <property type="entry name" value="MobA"/>
    <property type="match status" value="1"/>
</dbReference>
<dbReference type="InterPro" id="IPR025877">
    <property type="entry name" value="MobA-like_NTP_Trfase"/>
</dbReference>
<dbReference type="InterPro" id="IPR013482">
    <property type="entry name" value="Molybde_CF_guanTrfase"/>
</dbReference>
<dbReference type="InterPro" id="IPR029044">
    <property type="entry name" value="Nucleotide-diphossugar_trans"/>
</dbReference>
<dbReference type="PANTHER" id="PTHR19136">
    <property type="entry name" value="MOLYBDENUM COFACTOR GUANYLYLTRANSFERASE"/>
    <property type="match status" value="1"/>
</dbReference>
<dbReference type="PANTHER" id="PTHR19136:SF81">
    <property type="entry name" value="MOLYBDENUM COFACTOR GUANYLYLTRANSFERASE"/>
    <property type="match status" value="1"/>
</dbReference>
<dbReference type="Pfam" id="PF12804">
    <property type="entry name" value="NTP_transf_3"/>
    <property type="match status" value="1"/>
</dbReference>
<dbReference type="SUPFAM" id="SSF53448">
    <property type="entry name" value="Nucleotide-diphospho-sugar transferases"/>
    <property type="match status" value="1"/>
</dbReference>
<evidence type="ECO:0000255" key="1">
    <source>
        <dbReference type="HAMAP-Rule" id="MF_00316"/>
    </source>
</evidence>
<organism>
    <name type="scientific">Acinetobacter baumannii (strain ATCC 17978 / DSM 105126 / CIP 53.77 / LMG 1025 / NCDC KC755 / 5377)</name>
    <dbReference type="NCBI Taxonomy" id="400667"/>
    <lineage>
        <taxon>Bacteria</taxon>
        <taxon>Pseudomonadati</taxon>
        <taxon>Pseudomonadota</taxon>
        <taxon>Gammaproteobacteria</taxon>
        <taxon>Moraxellales</taxon>
        <taxon>Moraxellaceae</taxon>
        <taxon>Acinetobacter</taxon>
        <taxon>Acinetobacter calcoaceticus/baumannii complex</taxon>
    </lineage>
</organism>
<feature type="chain" id="PRO_1000132950" description="Molybdenum cofactor guanylyltransferase">
    <location>
        <begin position="1"/>
        <end position="209"/>
    </location>
</feature>
<feature type="binding site" evidence="1">
    <location>
        <begin position="13"/>
        <end position="15"/>
    </location>
    <ligand>
        <name>GTP</name>
        <dbReference type="ChEBI" id="CHEBI:37565"/>
    </ligand>
</feature>
<feature type="binding site" evidence="1">
    <location>
        <position position="26"/>
    </location>
    <ligand>
        <name>GTP</name>
        <dbReference type="ChEBI" id="CHEBI:37565"/>
    </ligand>
</feature>
<feature type="binding site" evidence="1">
    <location>
        <position position="54"/>
    </location>
    <ligand>
        <name>GTP</name>
        <dbReference type="ChEBI" id="CHEBI:37565"/>
    </ligand>
</feature>
<feature type="binding site" evidence="1">
    <location>
        <position position="74"/>
    </location>
    <ligand>
        <name>GTP</name>
        <dbReference type="ChEBI" id="CHEBI:37565"/>
    </ligand>
</feature>
<feature type="binding site" evidence="1">
    <location>
        <position position="104"/>
    </location>
    <ligand>
        <name>GTP</name>
        <dbReference type="ChEBI" id="CHEBI:37565"/>
    </ligand>
</feature>
<feature type="binding site" evidence="1">
    <location>
        <position position="104"/>
    </location>
    <ligand>
        <name>Mg(2+)</name>
        <dbReference type="ChEBI" id="CHEBI:18420"/>
    </ligand>
</feature>